<evidence type="ECO:0000250" key="1"/>
<evidence type="ECO:0000250" key="2">
    <source>
        <dbReference type="UniProtKB" id="P33121"/>
    </source>
</evidence>
<evidence type="ECO:0000250" key="3">
    <source>
        <dbReference type="UniProtKB" id="P41216"/>
    </source>
</evidence>
<evidence type="ECO:0000255" key="4"/>
<evidence type="ECO:0000269" key="5">
    <source>
    </source>
</evidence>
<evidence type="ECO:0000269" key="6">
    <source>
    </source>
</evidence>
<evidence type="ECO:0000269" key="7">
    <source>
    </source>
</evidence>
<evidence type="ECO:0000269" key="8">
    <source>
    </source>
</evidence>
<evidence type="ECO:0000269" key="9">
    <source>
    </source>
</evidence>
<evidence type="ECO:0000269" key="10">
    <source>
    </source>
</evidence>
<evidence type="ECO:0000269" key="11">
    <source>
    </source>
</evidence>
<evidence type="ECO:0000303" key="12">
    <source>
    </source>
</evidence>
<evidence type="ECO:0000305" key="13"/>
<evidence type="ECO:0000305" key="14">
    <source>
    </source>
</evidence>
<evidence type="ECO:0000305" key="15">
    <source>
    </source>
</evidence>
<evidence type="ECO:0000305" key="16">
    <source>
    </source>
</evidence>
<evidence type="ECO:0000312" key="17">
    <source>
        <dbReference type="RGD" id="2015"/>
    </source>
</evidence>
<reference key="1">
    <citation type="journal article" date="1990" name="J. Biol. Chem.">
        <title>Structure and regulation of rat long-chain acyl-CoA synthetase.</title>
        <authorList>
            <person name="Suzuki H."/>
            <person name="Kawarabayasi Y."/>
            <person name="Kondo J."/>
            <person name="Abe T."/>
            <person name="Nishikawa K."/>
            <person name="Kimura S."/>
            <person name="Hashimoto T."/>
            <person name="Yamamoto T."/>
        </authorList>
    </citation>
    <scope>NUCLEOTIDE SEQUENCE [MRNA]</scope>
    <scope>PARTIAL PROTEIN SEQUENCE</scope>
    <source>
        <strain>Wistar</strain>
        <tissue>Liver</tissue>
    </source>
</reference>
<reference key="2">
    <citation type="journal article" date="2007" name="Biochim. Biophys. Acta">
        <title>Post-translational modifications of rat liver mitochondrial outer membrane proteins identified by mass spectrometry.</title>
        <authorList>
            <person name="Distler A.M."/>
            <person name="Kerner J."/>
            <person name="Hoppel C.L."/>
        </authorList>
    </citation>
    <scope>PROTEIN SEQUENCE OF 1-19; 82-91 AND 628-641</scope>
    <scope>ACETYLATION AT MET-1 AND LYS-633</scope>
    <scope>NITRATION AT TYR-9 AND TYR-86</scope>
    <scope>PHOSPHORYLATION AT TYR-85</scope>
    <scope>IDENTIFICATION BY MASS SPECTROMETRY</scope>
    <source>
        <tissue>Liver</tissue>
    </source>
</reference>
<reference key="3">
    <citation type="journal article" date="1996" name="Eur. J. Biochem.">
        <title>Biochemical studies of two rat acyl-CoA synthetases, ACS1 and ACS2.</title>
        <authorList>
            <person name="Iijima H."/>
            <person name="Fujino T."/>
            <person name="Minekura H."/>
            <person name="Suzuki H."/>
            <person name="Kang M.-J."/>
            <person name="Yamamoto T.T."/>
        </authorList>
    </citation>
    <scope>CHARACTERIZATION</scope>
</reference>
<reference key="4">
    <citation type="journal article" date="1996" name="J. Lipid Res.">
        <title>Phytanic acid activation in rat liver peroxisomes is catalyzed by long-chain acyl-CoA synthetase.</title>
        <authorList>
            <person name="Watkins P.A."/>
            <person name="Howard A.E."/>
            <person name="Gould S.J."/>
            <person name="Avigan J."/>
            <person name="Mihalik S.J."/>
        </authorList>
    </citation>
    <scope>CATALYTIC ACTIVITY</scope>
    <scope>FUNCTION</scope>
    <scope>ACTIVITY REGULATION</scope>
</reference>
<reference key="5">
    <citation type="journal article" date="1999" name="Biochem. Biophys. Res. Commun.">
        <title>Human very-long-chain acyl-CoA synthetase: cloning, topography, and relevance to branched-chain fatty acid metabolism.</title>
        <authorList>
            <person name="Steinberg S.J."/>
            <person name="Wang S.J."/>
            <person name="Kim D.G."/>
            <person name="Mihalik S.J."/>
            <person name="Watkins P.A."/>
        </authorList>
    </citation>
    <scope>CATALYTIC ACTIVITY</scope>
    <scope>FUNCTION</scope>
</reference>
<reference key="6">
    <citation type="journal article" date="2000" name="J. Biol. Chem.">
        <title>The human liver-specific homolog of very long-chain acyl-CoA synthetase is cholate:CoA ligase.</title>
        <authorList>
            <person name="Steinberg S.J."/>
            <person name="Mihalik S.J."/>
            <person name="Kim D.G."/>
            <person name="Cuebas D.A."/>
            <person name="Watkins P.A."/>
        </authorList>
    </citation>
    <scope>CATALYTIC ACTIVITY</scope>
    <scope>FUNCTION</scope>
</reference>
<reference key="7">
    <citation type="journal article" date="2005" name="Biochemistry">
        <title>Characterization of recombinant long-chain rat acyl-CoA synthetase isoforms 3 and 6: identification of a novel variant of isoform 6.</title>
        <authorList>
            <person name="Van Horn C.G."/>
            <person name="Caviglia J.M."/>
            <person name="Li L.O."/>
            <person name="Wang S."/>
            <person name="Granger D.A."/>
            <person name="Coleman R.A."/>
        </authorList>
    </citation>
    <scope>BIOPHYSICOCHEMICAL PROPERTIES</scope>
    <source>
        <tissue>Brain</tissue>
    </source>
</reference>
<reference key="8">
    <citation type="journal article" date="2013" name="PLoS ONE">
        <title>Discovery and confirmation of O-GlcNAcylated proteins in rat liver mitochondria by combination of mass spectrometry and immunological methods.</title>
        <authorList>
            <person name="Cao W."/>
            <person name="Cao J."/>
            <person name="Huang J."/>
            <person name="Yao J."/>
            <person name="Yan G."/>
            <person name="Xu H."/>
            <person name="Yang P."/>
        </authorList>
    </citation>
    <scope>GLYCOSYLATION AT SER-136</scope>
</reference>
<reference key="9">
    <citation type="journal article" date="2017" name="J. Lipid Res.">
        <title>Long-chain acyl-CoA synthetase isoforms differ in preferences for eicosanoid species and long-chain fatty acids.</title>
        <authorList>
            <person name="Klett E.L."/>
            <person name="Chen S."/>
            <person name="Yechoor A."/>
            <person name="Lih F.B."/>
            <person name="Coleman R.A."/>
        </authorList>
    </citation>
    <scope>CATALYTIC ACTIVITY</scope>
    <scope>FUNCTION</scope>
    <scope>BIOPHYSICOCHEMICAL PROPERTIES</scope>
</reference>
<reference key="10">
    <citation type="journal article" date="2017" name="J. Lipid Res.">
        <authorList>
            <person name="Klett E.L."/>
            <person name="Chen S."/>
            <person name="Yechoor A."/>
            <person name="Lih F.B."/>
            <person name="Coleman R.A."/>
        </authorList>
    </citation>
    <scope>ERRATUM OF PUBMED:28209804</scope>
</reference>
<comment type="function">
    <text evidence="2 5 6 10 11">Catalyzes the conversion of long-chain fatty acids to their active form acyl-CoAs for both synthesis of cellular lipids, and degradation via beta-oxidation (PubMed:10198260, PubMed:10749848, PubMed:28209804, PubMed:8978480). Preferentially uses palmitoleate, oleate and linoleate (By similarity). Preferentially activates arachidonate than epoxyeicosatrienoic acids (EETs) or hydroxyeicosatrienoic acids (HETEs) (PubMed:28209804).</text>
</comment>
<comment type="catalytic activity">
    <reaction evidence="10">
        <text>a long-chain fatty acid + ATP + CoA = a long-chain fatty acyl-CoA + AMP + diphosphate</text>
        <dbReference type="Rhea" id="RHEA:15421"/>
        <dbReference type="ChEBI" id="CHEBI:30616"/>
        <dbReference type="ChEBI" id="CHEBI:33019"/>
        <dbReference type="ChEBI" id="CHEBI:57287"/>
        <dbReference type="ChEBI" id="CHEBI:57560"/>
        <dbReference type="ChEBI" id="CHEBI:83139"/>
        <dbReference type="ChEBI" id="CHEBI:456215"/>
        <dbReference type="EC" id="6.2.1.3"/>
    </reaction>
    <physiologicalReaction direction="left-to-right" evidence="10">
        <dbReference type="Rhea" id="RHEA:15422"/>
    </physiologicalReaction>
</comment>
<comment type="catalytic activity">
    <reaction evidence="10">
        <text>(5Z,8Z,11Z,14Z)-eicosatetraenoate + ATP + CoA = (5Z,8Z,11Z,14Z)-eicosatetraenoyl-CoA + AMP + diphosphate</text>
        <dbReference type="Rhea" id="RHEA:19713"/>
        <dbReference type="ChEBI" id="CHEBI:30616"/>
        <dbReference type="ChEBI" id="CHEBI:32395"/>
        <dbReference type="ChEBI" id="CHEBI:33019"/>
        <dbReference type="ChEBI" id="CHEBI:57287"/>
        <dbReference type="ChEBI" id="CHEBI:57368"/>
        <dbReference type="ChEBI" id="CHEBI:456215"/>
        <dbReference type="EC" id="6.2.1.15"/>
    </reaction>
    <physiologicalReaction direction="left-to-right" evidence="10">
        <dbReference type="Rhea" id="RHEA:19714"/>
    </physiologicalReaction>
</comment>
<comment type="catalytic activity">
    <reaction evidence="5 11">
        <text>3,7,11,15-tetramethylhexadecanoate + ATP + CoA = phytanoyl-CoA + AMP + diphosphate</text>
        <dbReference type="Rhea" id="RHEA:21380"/>
        <dbReference type="ChEBI" id="CHEBI:30616"/>
        <dbReference type="ChEBI" id="CHEBI:33019"/>
        <dbReference type="ChEBI" id="CHEBI:37257"/>
        <dbReference type="ChEBI" id="CHEBI:57287"/>
        <dbReference type="ChEBI" id="CHEBI:57391"/>
        <dbReference type="ChEBI" id="CHEBI:456215"/>
        <dbReference type="EC" id="6.2.1.24"/>
    </reaction>
    <physiologicalReaction direction="left-to-right" evidence="14 16">
        <dbReference type="Rhea" id="RHEA:21381"/>
    </physiologicalReaction>
</comment>
<comment type="catalytic activity">
    <reaction evidence="6 11">
        <text>hexadecanoate + ATP + CoA = hexadecanoyl-CoA + AMP + diphosphate</text>
        <dbReference type="Rhea" id="RHEA:30751"/>
        <dbReference type="ChEBI" id="CHEBI:7896"/>
        <dbReference type="ChEBI" id="CHEBI:30616"/>
        <dbReference type="ChEBI" id="CHEBI:33019"/>
        <dbReference type="ChEBI" id="CHEBI:57287"/>
        <dbReference type="ChEBI" id="CHEBI:57379"/>
        <dbReference type="ChEBI" id="CHEBI:456215"/>
    </reaction>
    <physiologicalReaction direction="left-to-right" evidence="15 16">
        <dbReference type="Rhea" id="RHEA:30752"/>
    </physiologicalReaction>
</comment>
<comment type="catalytic activity">
    <reaction evidence="2">
        <text>(E)-hexadec-2-enoate + ATP + CoA = (2E)-hexadecenoyl-CoA + AMP + diphosphate</text>
        <dbReference type="Rhea" id="RHEA:36139"/>
        <dbReference type="ChEBI" id="CHEBI:30616"/>
        <dbReference type="ChEBI" id="CHEBI:33019"/>
        <dbReference type="ChEBI" id="CHEBI:57287"/>
        <dbReference type="ChEBI" id="CHEBI:61526"/>
        <dbReference type="ChEBI" id="CHEBI:72745"/>
        <dbReference type="ChEBI" id="CHEBI:456215"/>
    </reaction>
    <physiologicalReaction direction="left-to-right" evidence="2">
        <dbReference type="Rhea" id="RHEA:36140"/>
    </physiologicalReaction>
</comment>
<comment type="catalytic activity">
    <reaction evidence="5">
        <text>2,6,10,14-tetramethylpentadecanoate + ATP + CoA = pristanoyl-CoA + AMP + diphosphate</text>
        <dbReference type="Rhea" id="RHEA:47264"/>
        <dbReference type="ChEBI" id="CHEBI:30616"/>
        <dbReference type="ChEBI" id="CHEBI:33019"/>
        <dbReference type="ChEBI" id="CHEBI:57287"/>
        <dbReference type="ChEBI" id="CHEBI:77250"/>
        <dbReference type="ChEBI" id="CHEBI:77268"/>
        <dbReference type="ChEBI" id="CHEBI:456215"/>
    </reaction>
    <physiologicalReaction direction="left-to-right" evidence="14">
        <dbReference type="Rhea" id="RHEA:47265"/>
    </physiologicalReaction>
</comment>
<comment type="catalytic activity">
    <reaction evidence="10">
        <text>14,15-epoxy-(5Z,8Z,11Z)-eicosatrienoate + ATP + CoA = 14,15-epoxy-(5Z,8Z,11Z)-eicosatrienoyl-CoA + AMP + diphosphate</text>
        <dbReference type="Rhea" id="RHEA:52016"/>
        <dbReference type="ChEBI" id="CHEBI:30616"/>
        <dbReference type="ChEBI" id="CHEBI:33019"/>
        <dbReference type="ChEBI" id="CHEBI:57287"/>
        <dbReference type="ChEBI" id="CHEBI:84024"/>
        <dbReference type="ChEBI" id="CHEBI:136117"/>
        <dbReference type="ChEBI" id="CHEBI:456215"/>
    </reaction>
    <physiologicalReaction direction="left-to-right" evidence="10">
        <dbReference type="Rhea" id="RHEA:52017"/>
    </physiologicalReaction>
</comment>
<comment type="catalytic activity">
    <reaction evidence="10">
        <text>5-hydroxy-(6E,8Z,11Z,14Z)-eicosatetraenoate + ATP + CoA = 5-hydroxy-(6E,8Z,11Z,14Z)-eicosatetraenoyl-CoA + AMP + diphosphate</text>
        <dbReference type="Rhea" id="RHEA:52108"/>
        <dbReference type="ChEBI" id="CHEBI:30616"/>
        <dbReference type="ChEBI" id="CHEBI:33019"/>
        <dbReference type="ChEBI" id="CHEBI:57287"/>
        <dbReference type="ChEBI" id="CHEBI:65341"/>
        <dbReference type="ChEBI" id="CHEBI:136407"/>
        <dbReference type="ChEBI" id="CHEBI:456215"/>
    </reaction>
    <physiologicalReaction direction="left-to-right" evidence="10">
        <dbReference type="Rhea" id="RHEA:52109"/>
    </physiologicalReaction>
</comment>
<comment type="catalytic activity">
    <reaction evidence="10">
        <text>12-hydroxy-(5Z,8Z,10E,14Z)-eicosatetraenoate + ATP + CoA = 12-hydroxy-(5Z,8Z,10E,14Z)-eicosatetraenoyl-CoA + AMP + diphosphate</text>
        <dbReference type="Rhea" id="RHEA:52112"/>
        <dbReference type="ChEBI" id="CHEBI:30616"/>
        <dbReference type="ChEBI" id="CHEBI:33019"/>
        <dbReference type="ChEBI" id="CHEBI:57287"/>
        <dbReference type="ChEBI" id="CHEBI:90718"/>
        <dbReference type="ChEBI" id="CHEBI:136408"/>
        <dbReference type="ChEBI" id="CHEBI:456215"/>
    </reaction>
    <physiologicalReaction direction="left-to-right" evidence="10">
        <dbReference type="Rhea" id="RHEA:52113"/>
    </physiologicalReaction>
</comment>
<comment type="catalytic activity">
    <reaction evidence="10">
        <text>15-hydroxy-(5Z,8Z,11Z,13E)-eicosatetraenoate + ATP + CoA = 15-hydroxy-(5Z,8Z,11Z,13E)-eicosatetraenoyl-CoA + AMP + diphosphate</text>
        <dbReference type="Rhea" id="RHEA:52116"/>
        <dbReference type="ChEBI" id="CHEBI:30616"/>
        <dbReference type="ChEBI" id="CHEBI:33019"/>
        <dbReference type="ChEBI" id="CHEBI:57287"/>
        <dbReference type="ChEBI" id="CHEBI:78832"/>
        <dbReference type="ChEBI" id="CHEBI:136409"/>
        <dbReference type="ChEBI" id="CHEBI:456215"/>
    </reaction>
    <physiologicalReaction direction="left-to-right" evidence="10">
        <dbReference type="Rhea" id="RHEA:52117"/>
    </physiologicalReaction>
</comment>
<comment type="catalytic activity">
    <reaction evidence="2">
        <text>(9Z)-octadecenoate + ATP + CoA = (9Z)-octadecenoyl-CoA + AMP + diphosphate</text>
        <dbReference type="Rhea" id="RHEA:33607"/>
        <dbReference type="ChEBI" id="CHEBI:30616"/>
        <dbReference type="ChEBI" id="CHEBI:30823"/>
        <dbReference type="ChEBI" id="CHEBI:33019"/>
        <dbReference type="ChEBI" id="CHEBI:57287"/>
        <dbReference type="ChEBI" id="CHEBI:57387"/>
        <dbReference type="ChEBI" id="CHEBI:456215"/>
    </reaction>
    <physiologicalReaction direction="left-to-right" evidence="2">
        <dbReference type="Rhea" id="RHEA:33608"/>
    </physiologicalReaction>
</comment>
<comment type="cofactor">
    <cofactor>
        <name>Mg(2+)</name>
        <dbReference type="ChEBI" id="CHEBI:18420"/>
    </cofactor>
</comment>
<comment type="activity regulation">
    <text evidence="11">Inhibited at high temperature and by arachidonate.</text>
</comment>
<comment type="biophysicochemical properties">
    <kinetics>
        <KM evidence="7">649 uM for ATP</KM>
        <KM evidence="7">6.4 uM for CoA</KM>
        <KM evidence="7">5 uM for palmitate</KM>
        <KM evidence="10">2.7 uM for palmitate (when expressed in bacteria)</KM>
        <KM evidence="10">6.6 uM for stearate (when expressed in bacteria)</KM>
        <KM evidence="10">6.7 uM for oleate (when expressed in bacteria)</KM>
        <KM evidence="10">5 uM for linoleate (when expressed in bacteria)</KM>
        <KM evidence="10">6.3 uM for arachidonate (when expressed in bacteria)</KM>
        <KM evidence="10">2.1 uM for palmitate (when expressed in mammalian cell)</KM>
        <KM evidence="10">11.5 uM for stearate (when expressed in mammalian cell)</KM>
        <KM evidence="10">14.7 uM for oleate (when expressed in mammalian cell)</KM>
        <KM evidence="10">7 uM for linoleate (when expressed in mammalian cell)</KM>
        <KM evidence="10">7.3 uM for arachidonate (when expressed in mammalian cell)</KM>
        <Vmax evidence="7">1695.0 nmol/min/mg enzyme with palmitate as substrate</Vmax>
        <Vmax evidence="10">3068.0 nmol/min/mg enzyme with palmitate as substrate (when expressed in mammalian cell)</Vmax>
        <Vmax evidence="10">2342.0 nmol/min/mg enzyme with stearate as substrate (when expressed in mammalian cell)</Vmax>
        <Vmax evidence="10">2607.0 nmol/min/mg enzyme with oleate as substrate (when expressed in mammalian cell)</Vmax>
        <Vmax evidence="10">2525.0 nmol/min/mg enzyme with linoleate as substrate (when expressed in mammalian cell)</Vmax>
        <Vmax evidence="10">1745.0 nmol/min/mg enzyme with arachidonate as substrate (when expressed in mammalian cell)</Vmax>
        <Vmax evidence="10">3754.0 nmol/min/mg enzyme with palmitate as substrate (when expressed in bacteria)</Vmax>
        <Vmax evidence="10">2874.0 nmol/min/mg enzyme with stearate as substrate (when expressed in bacteria)</Vmax>
        <Vmax evidence="10">2089.0 nmol/min/mg enzyme with oleate as substrate (when expressed in bacteria)</Vmax>
        <Vmax evidence="10">1635.0 nmol/min/mg enzyme with linoleate as substrate (when expressed in bacteria)</Vmax>
        <Vmax evidence="10">3363.0 nmol/min/mg enzyme with arachidonate as substrate (when expressed in bacteria)</Vmax>
    </kinetics>
</comment>
<comment type="subcellular location">
    <subcellularLocation>
        <location evidence="1">Mitochondrion outer membrane</location>
        <topology evidence="1">Single-pass type III membrane protein</topology>
    </subcellularLocation>
    <subcellularLocation>
        <location evidence="1">Peroxisome membrane</location>
        <topology evidence="1">Single-pass type III membrane protein</topology>
    </subcellularLocation>
    <subcellularLocation>
        <location evidence="1">Microsome membrane</location>
        <topology evidence="1">Single-pass type III membrane protein</topology>
    </subcellularLocation>
    <subcellularLocation>
        <location evidence="2">Endoplasmic reticulum membrane</location>
        <topology evidence="1">Single-pass type III membrane protein</topology>
    </subcellularLocation>
</comment>
<comment type="tissue specificity">
    <text>Liver, heart, epididymal adipose and to a lesser extent brain, small intestine and lung.</text>
</comment>
<comment type="developmental stage">
    <text>Levels remain constant during development.</text>
</comment>
<comment type="induction">
    <text>By high fat and high carbohydrate diets.</text>
</comment>
<comment type="miscellaneous">
    <text evidence="12">5 rat isozymes encoded by different genes have been described. ACSL6 corresponds to isozyme 2 (ACS2).</text>
</comment>
<comment type="similarity">
    <text evidence="13">Belongs to the ATP-dependent AMP-binding enzyme family.</text>
</comment>
<protein>
    <recommendedName>
        <fullName evidence="13">Long-chain-fatty-acid--CoA ligase 1</fullName>
        <ecNumber evidence="10">6.2.1.3</ecNumber>
    </recommendedName>
    <alternativeName>
        <fullName>Arachidonate--CoA ligase</fullName>
        <ecNumber evidence="10">6.2.1.15</ecNumber>
    </alternativeName>
    <alternativeName>
        <fullName>Long-chain acyl-CoA synthetase 1</fullName>
        <shortName>LACS 1</shortName>
    </alternativeName>
    <alternativeName>
        <fullName>Long-chain-fatty-acid--CoA ligase, liver isozyme</fullName>
    </alternativeName>
    <alternativeName>
        <fullName>Phytanate--CoA ligase</fullName>
        <ecNumber evidence="5 11">6.2.1.24</ecNumber>
    </alternativeName>
</protein>
<proteinExistence type="evidence at protein level"/>
<gene>
    <name evidence="17" type="primary">Acsl1</name>
    <name type="synonym">Acs1</name>
    <name type="synonym">Acsl2</name>
    <name type="synonym">Facl2</name>
</gene>
<organism>
    <name type="scientific">Rattus norvegicus</name>
    <name type="common">Rat</name>
    <dbReference type="NCBI Taxonomy" id="10116"/>
    <lineage>
        <taxon>Eukaryota</taxon>
        <taxon>Metazoa</taxon>
        <taxon>Chordata</taxon>
        <taxon>Craniata</taxon>
        <taxon>Vertebrata</taxon>
        <taxon>Euteleostomi</taxon>
        <taxon>Mammalia</taxon>
        <taxon>Eutheria</taxon>
        <taxon>Euarchontoglires</taxon>
        <taxon>Glires</taxon>
        <taxon>Rodentia</taxon>
        <taxon>Myomorpha</taxon>
        <taxon>Muroidea</taxon>
        <taxon>Muridae</taxon>
        <taxon>Murinae</taxon>
        <taxon>Rattus</taxon>
    </lineage>
</organism>
<keyword id="KW-0007">Acetylation</keyword>
<keyword id="KW-0067">ATP-binding</keyword>
<keyword id="KW-0903">Direct protein sequencing</keyword>
<keyword id="KW-0256">Endoplasmic reticulum</keyword>
<keyword id="KW-0276">Fatty acid metabolism</keyword>
<keyword id="KW-0325">Glycoprotein</keyword>
<keyword id="KW-0436">Ligase</keyword>
<keyword id="KW-0443">Lipid metabolism</keyword>
<keyword id="KW-0460">Magnesium</keyword>
<keyword id="KW-0472">Membrane</keyword>
<keyword id="KW-0492">Microsome</keyword>
<keyword id="KW-0496">Mitochondrion</keyword>
<keyword id="KW-1000">Mitochondrion outer membrane</keyword>
<keyword id="KW-0944">Nitration</keyword>
<keyword id="KW-0547">Nucleotide-binding</keyword>
<keyword id="KW-0576">Peroxisome</keyword>
<keyword id="KW-0597">Phosphoprotein</keyword>
<keyword id="KW-1185">Reference proteome</keyword>
<keyword id="KW-0735">Signal-anchor</keyword>
<keyword id="KW-0812">Transmembrane</keyword>
<keyword id="KW-1133">Transmembrane helix</keyword>
<dbReference type="EC" id="6.2.1.3" evidence="10"/>
<dbReference type="EC" id="6.2.1.15" evidence="10"/>
<dbReference type="EC" id="6.2.1.24" evidence="5 11"/>
<dbReference type="EMBL" id="D90109">
    <property type="protein sequence ID" value="BAA14136.1"/>
    <property type="molecule type" value="mRNA"/>
</dbReference>
<dbReference type="PIR" id="A36275">
    <property type="entry name" value="A36275"/>
</dbReference>
<dbReference type="RefSeq" id="NP_036952.1">
    <property type="nucleotide sequence ID" value="NM_012820.2"/>
</dbReference>
<dbReference type="RefSeq" id="XP_006253184.1">
    <property type="nucleotide sequence ID" value="XM_006253122.3"/>
</dbReference>
<dbReference type="RefSeq" id="XP_006253185.1">
    <property type="nucleotide sequence ID" value="XM_006253123.3"/>
</dbReference>
<dbReference type="RefSeq" id="XP_006253186.1">
    <property type="nucleotide sequence ID" value="XM_006253124.4"/>
</dbReference>
<dbReference type="RefSeq" id="XP_006253187.1">
    <property type="nucleotide sequence ID" value="XM_006253125.5"/>
</dbReference>
<dbReference type="RefSeq" id="XP_006253188.1">
    <property type="nucleotide sequence ID" value="XM_006253126.4"/>
</dbReference>
<dbReference type="RefSeq" id="XP_006253189.1">
    <property type="nucleotide sequence ID" value="XM_006253127.1"/>
</dbReference>
<dbReference type="RefSeq" id="XP_008769476.1">
    <property type="nucleotide sequence ID" value="XM_008771254.1"/>
</dbReference>
<dbReference type="RefSeq" id="XP_063131127.1">
    <property type="nucleotide sequence ID" value="XM_063275057.1"/>
</dbReference>
<dbReference type="SMR" id="P18163"/>
<dbReference type="BioGRID" id="247327">
    <property type="interactions" value="1"/>
</dbReference>
<dbReference type="CORUM" id="P18163"/>
<dbReference type="FunCoup" id="P18163">
    <property type="interactions" value="2104"/>
</dbReference>
<dbReference type="IntAct" id="P18163">
    <property type="interactions" value="29"/>
</dbReference>
<dbReference type="STRING" id="10116.ENSRNOP00000014235"/>
<dbReference type="SwissLipids" id="SLP:000001018"/>
<dbReference type="CarbonylDB" id="P18163"/>
<dbReference type="GlyCosmos" id="P18163">
    <property type="glycosylation" value="1 site, No reported glycans"/>
</dbReference>
<dbReference type="GlyGen" id="P18163">
    <property type="glycosylation" value="3 sites, 1 O-linked glycan (3 sites)"/>
</dbReference>
<dbReference type="iPTMnet" id="P18163"/>
<dbReference type="PhosphoSitePlus" id="P18163"/>
<dbReference type="SwissPalm" id="P18163"/>
<dbReference type="jPOST" id="P18163"/>
<dbReference type="PaxDb" id="10116-ENSRNOP00000014235"/>
<dbReference type="Ensembl" id="ENSRNOT00000014235.4">
    <property type="protein sequence ID" value="ENSRNOP00000014235.1"/>
    <property type="gene ID" value="ENSRNOG00000010633.4"/>
</dbReference>
<dbReference type="GeneID" id="25288"/>
<dbReference type="KEGG" id="rno:25288"/>
<dbReference type="AGR" id="RGD:2015"/>
<dbReference type="CTD" id="2180"/>
<dbReference type="RGD" id="2015">
    <property type="gene designation" value="Acsl1"/>
</dbReference>
<dbReference type="eggNOG" id="KOG1256">
    <property type="taxonomic scope" value="Eukaryota"/>
</dbReference>
<dbReference type="GeneTree" id="ENSGT00940000154508"/>
<dbReference type="HOGENOM" id="CLU_000022_45_4_1"/>
<dbReference type="InParanoid" id="P18163"/>
<dbReference type="OrthoDB" id="1700726at2759"/>
<dbReference type="PhylomeDB" id="P18163"/>
<dbReference type="TreeFam" id="TF313877"/>
<dbReference type="BioCyc" id="MetaCyc:MONOMER-14442"/>
<dbReference type="BRENDA" id="6.2.1.3">
    <property type="organism ID" value="5301"/>
</dbReference>
<dbReference type="Reactome" id="R-RNO-2046105">
    <property type="pathway name" value="Linoleic acid (LA) metabolism"/>
</dbReference>
<dbReference type="Reactome" id="R-RNO-2046106">
    <property type="pathway name" value="alpha-linolenic acid (ALA) metabolism"/>
</dbReference>
<dbReference type="Reactome" id="R-RNO-75876">
    <property type="pathway name" value="Synthesis of very long-chain fatty acyl-CoAs"/>
</dbReference>
<dbReference type="SABIO-RK" id="P18163"/>
<dbReference type="PRO" id="PR:P18163"/>
<dbReference type="Proteomes" id="UP000002494">
    <property type="component" value="Chromosome 16"/>
</dbReference>
<dbReference type="Bgee" id="ENSRNOG00000010633">
    <property type="expression patterns" value="Expressed in liver and 19 other cell types or tissues"/>
</dbReference>
<dbReference type="GO" id="GO:0005783">
    <property type="term" value="C:endoplasmic reticulum"/>
    <property type="evidence" value="ECO:0000266"/>
    <property type="project" value="RGD"/>
</dbReference>
<dbReference type="GO" id="GO:0005789">
    <property type="term" value="C:endoplasmic reticulum membrane"/>
    <property type="evidence" value="ECO:0007669"/>
    <property type="project" value="UniProtKB-SubCell"/>
</dbReference>
<dbReference type="GO" id="GO:0016020">
    <property type="term" value="C:membrane"/>
    <property type="evidence" value="ECO:0000318"/>
    <property type="project" value="GO_Central"/>
</dbReference>
<dbReference type="GO" id="GO:0005741">
    <property type="term" value="C:mitochondrial outer membrane"/>
    <property type="evidence" value="ECO:0000314"/>
    <property type="project" value="RGD"/>
</dbReference>
<dbReference type="GO" id="GO:0005739">
    <property type="term" value="C:mitochondrion"/>
    <property type="evidence" value="ECO:0000314"/>
    <property type="project" value="ARUK-UCL"/>
</dbReference>
<dbReference type="GO" id="GO:0005778">
    <property type="term" value="C:peroxisomal membrane"/>
    <property type="evidence" value="ECO:0000314"/>
    <property type="project" value="HGNC-UCL"/>
</dbReference>
<dbReference type="GO" id="GO:0003987">
    <property type="term" value="F:acetate-CoA ligase activity"/>
    <property type="evidence" value="ECO:0000304"/>
    <property type="project" value="RGD"/>
</dbReference>
<dbReference type="GO" id="GO:0047676">
    <property type="term" value="F:arachidonate-CoA ligase activity"/>
    <property type="evidence" value="ECO:0000314"/>
    <property type="project" value="UniProtKB"/>
</dbReference>
<dbReference type="GO" id="GO:0005524">
    <property type="term" value="F:ATP binding"/>
    <property type="evidence" value="ECO:0007669"/>
    <property type="project" value="UniProtKB-KW"/>
</dbReference>
<dbReference type="GO" id="GO:0004467">
    <property type="term" value="F:long-chain fatty acid-CoA ligase activity"/>
    <property type="evidence" value="ECO:0000314"/>
    <property type="project" value="UniProtKB"/>
</dbReference>
<dbReference type="GO" id="GO:0090434">
    <property type="term" value="F:oleoyl-CoA ligase activity"/>
    <property type="evidence" value="ECO:0000315"/>
    <property type="project" value="ARUK-UCL"/>
</dbReference>
<dbReference type="GO" id="GO:0090433">
    <property type="term" value="F:palmitoyl-CoA ligase activity"/>
    <property type="evidence" value="ECO:0007669"/>
    <property type="project" value="Ensembl"/>
</dbReference>
<dbReference type="GO" id="GO:0050197">
    <property type="term" value="F:phytanate-CoA ligase activity"/>
    <property type="evidence" value="ECO:0000314"/>
    <property type="project" value="UniProtKB"/>
</dbReference>
<dbReference type="GO" id="GO:0070251">
    <property type="term" value="F:pristanate-CoA ligase activity"/>
    <property type="evidence" value="ECO:0007669"/>
    <property type="project" value="RHEA"/>
</dbReference>
<dbReference type="GO" id="GO:0043539">
    <property type="term" value="F:protein serine/threonine kinase activator activity"/>
    <property type="evidence" value="ECO:0000266"/>
    <property type="project" value="RGD"/>
</dbReference>
<dbReference type="GO" id="GO:0033211">
    <property type="term" value="P:adiponectin-activated signaling pathway"/>
    <property type="evidence" value="ECO:0000266"/>
    <property type="project" value="RGD"/>
</dbReference>
<dbReference type="GO" id="GO:0006633">
    <property type="term" value="P:fatty acid biosynthetic process"/>
    <property type="evidence" value="ECO:0007669"/>
    <property type="project" value="Ensembl"/>
</dbReference>
<dbReference type="GO" id="GO:0006631">
    <property type="term" value="P:fatty acid metabolic process"/>
    <property type="evidence" value="ECO:0000315"/>
    <property type="project" value="RGD"/>
</dbReference>
<dbReference type="GO" id="GO:0015908">
    <property type="term" value="P:fatty acid transport"/>
    <property type="evidence" value="ECO:0000316"/>
    <property type="project" value="RGD"/>
</dbReference>
<dbReference type="GO" id="GO:0043651">
    <property type="term" value="P:linoleic acid metabolic process"/>
    <property type="evidence" value="ECO:0007669"/>
    <property type="project" value="Ensembl"/>
</dbReference>
<dbReference type="GO" id="GO:0008610">
    <property type="term" value="P:lipid biosynthetic process"/>
    <property type="evidence" value="ECO:0000266"/>
    <property type="project" value="RGD"/>
</dbReference>
<dbReference type="GO" id="GO:0044539">
    <property type="term" value="P:long-chain fatty acid import into cell"/>
    <property type="evidence" value="ECO:0000315"/>
    <property type="project" value="ARUK-UCL"/>
</dbReference>
<dbReference type="GO" id="GO:0001676">
    <property type="term" value="P:long-chain fatty acid metabolic process"/>
    <property type="evidence" value="ECO:0000314"/>
    <property type="project" value="UniProtKB"/>
</dbReference>
<dbReference type="GO" id="GO:0035338">
    <property type="term" value="P:long-chain fatty-acyl-CoA biosynthetic process"/>
    <property type="evidence" value="ECO:0000316"/>
    <property type="project" value="RGD"/>
</dbReference>
<dbReference type="GO" id="GO:0120162">
    <property type="term" value="P:positive regulation of cold-induced thermogenesis"/>
    <property type="evidence" value="ECO:0000250"/>
    <property type="project" value="YuBioLab"/>
</dbReference>
<dbReference type="GO" id="GO:0010747">
    <property type="term" value="P:positive regulation of long-chain fatty acid import across plasma membrane"/>
    <property type="evidence" value="ECO:0000314"/>
    <property type="project" value="ARUK-UCL"/>
</dbReference>
<dbReference type="GO" id="GO:0007584">
    <property type="term" value="P:response to nutrient"/>
    <property type="evidence" value="ECO:0000270"/>
    <property type="project" value="RGD"/>
</dbReference>
<dbReference type="GO" id="GO:0034201">
    <property type="term" value="P:response to oleic acid"/>
    <property type="evidence" value="ECO:0000270"/>
    <property type="project" value="RGD"/>
</dbReference>
<dbReference type="GO" id="GO:0009410">
    <property type="term" value="P:response to xenobiotic stimulus"/>
    <property type="evidence" value="ECO:0000270"/>
    <property type="project" value="RGD"/>
</dbReference>
<dbReference type="GO" id="GO:0019432">
    <property type="term" value="P:triglyceride biosynthetic process"/>
    <property type="evidence" value="ECO:0000316"/>
    <property type="project" value="RGD"/>
</dbReference>
<dbReference type="GO" id="GO:0000038">
    <property type="term" value="P:very long-chain fatty acid metabolic process"/>
    <property type="evidence" value="ECO:0000314"/>
    <property type="project" value="UniProtKB"/>
</dbReference>
<dbReference type="GO" id="GO:0042178">
    <property type="term" value="P:xenobiotic catabolic process"/>
    <property type="evidence" value="ECO:0000314"/>
    <property type="project" value="RGD"/>
</dbReference>
<dbReference type="CDD" id="cd05927">
    <property type="entry name" value="LC-FACS_euk"/>
    <property type="match status" value="1"/>
</dbReference>
<dbReference type="Gene3D" id="3.40.50.12780">
    <property type="entry name" value="N-terminal domain of ligase-like"/>
    <property type="match status" value="1"/>
</dbReference>
<dbReference type="InterPro" id="IPR020845">
    <property type="entry name" value="AMP-binding_CS"/>
</dbReference>
<dbReference type="InterPro" id="IPR000873">
    <property type="entry name" value="AMP-dep_synth/lig_dom"/>
</dbReference>
<dbReference type="InterPro" id="IPR042099">
    <property type="entry name" value="ANL_N_sf"/>
</dbReference>
<dbReference type="InterPro" id="IPR045311">
    <property type="entry name" value="LC-FACS_euk"/>
</dbReference>
<dbReference type="PANTHER" id="PTHR43272">
    <property type="entry name" value="LONG-CHAIN-FATTY-ACID--COA LIGASE"/>
    <property type="match status" value="1"/>
</dbReference>
<dbReference type="PANTHER" id="PTHR43272:SF28">
    <property type="entry name" value="LONG-CHAIN-FATTY-ACID--COA LIGASE 1"/>
    <property type="match status" value="1"/>
</dbReference>
<dbReference type="Pfam" id="PF00501">
    <property type="entry name" value="AMP-binding"/>
    <property type="match status" value="1"/>
</dbReference>
<dbReference type="SUPFAM" id="SSF56801">
    <property type="entry name" value="Acetyl-CoA synthetase-like"/>
    <property type="match status" value="1"/>
</dbReference>
<dbReference type="PROSITE" id="PS00455">
    <property type="entry name" value="AMP_BINDING"/>
    <property type="match status" value="1"/>
</dbReference>
<name>ACSL1_RAT</name>
<feature type="chain" id="PRO_0000193106" description="Long-chain-fatty-acid--CoA ligase 1">
    <location>
        <begin position="1"/>
        <end position="699"/>
    </location>
</feature>
<feature type="transmembrane region" description="Helical; Signal-anchor for type III membrane protein" evidence="4">
    <location>
        <begin position="25"/>
        <end position="45"/>
    </location>
</feature>
<feature type="topological domain" description="Cytoplasmic" evidence="4">
    <location>
        <begin position="46"/>
        <end position="699"/>
    </location>
</feature>
<feature type="modified residue" description="N-acetylmethionine" evidence="8">
    <location>
        <position position="1"/>
    </location>
</feature>
<feature type="modified residue" description="3'-nitrotyrosine" evidence="8">
    <location>
        <position position="9"/>
    </location>
</feature>
<feature type="modified residue" description="Phosphotyrosine" evidence="8">
    <location>
        <position position="85"/>
    </location>
</feature>
<feature type="modified residue" description="3'-nitrotyrosine" evidence="8">
    <location>
        <position position="86"/>
    </location>
</feature>
<feature type="modified residue" description="N6-acetyllysine" evidence="3">
    <location>
        <position position="208"/>
    </location>
</feature>
<feature type="modified residue" description="N6-acetyllysine" evidence="3">
    <location>
        <position position="357"/>
    </location>
</feature>
<feature type="modified residue" description="N6-acetyllysine" evidence="3">
    <location>
        <position position="387"/>
    </location>
</feature>
<feature type="modified residue" description="Phosphoserine" evidence="2">
    <location>
        <position position="621"/>
    </location>
</feature>
<feature type="modified residue" description="N6-acetyllysine" evidence="8">
    <location>
        <position position="633"/>
    </location>
</feature>
<feature type="glycosylation site" description="O-linked (GlcNAc) serine" evidence="9">
    <location>
        <position position="136"/>
    </location>
</feature>
<sequence>MEVHELFRYFRMPELIDIRQYVRTLPTNTLMGFGAFAALTTFWYATRPKALKPPCDLSMQSVEVTGTTEGVRRSAVLEDDKLLLYYYDDVRTMYDGFQRGIQVSNDGPCLGSRKPNQPYEWISYKQVAEMAECIGSALIQKGFKPCSEQFIGIFSQNRPEWVTIEQGCFTYSMVVVPLYDTLGTDAITYIVNKAELSVIFADKPEKAKLLLEGVENKLTPCLKIIVIMDSYDNDLVERGQKCGVEIIGLKALEDLGRVNRTKPKPPEPEDLAIICFTSGTTGNPKGAMVTHQNIMNDCSGFIKATESAFIASPEDVLISFLPLAHMFETVVECVMLCHGAKIGFFQGDIRLLMDDLKVLQPTIFPVVPRLLNRMFDRIFGQANTSVKRWLLDFASKRKEAELRSGIVRNNSLWDKLIFHKIQSSLGGKVRLMITGAAPVSATVLTFLRAALGCQFYEGYGQTECTAGCCLSLPGDWTAGHVGAPMPCNYIKLVDVEDMNYQAAKGEGEVCVKGANVFKGYLKDPARTAEALDKDGWLHTGDIGKWLPNGTLKIIDRKKHIFKLAQGEYIAPEKIENIYLRSEAVAQVFVHGESLQAFLIAIVVPDVEILPSWAQKRGFQGSFEELCRNKDINKAILEDMVKLGKNAGLKPFEQVKGIAVHPELFSIDNGLLTPTLKAKRPELRNYFRSQIDELYSTIKI</sequence>
<accession>P18163</accession>